<reference key="1">
    <citation type="submission" date="2006-08" db="EMBL/GenBank/DDBJ databases">
        <title>Complete sequence of Shewanella sp. MR-4.</title>
        <authorList>
            <consortium name="US DOE Joint Genome Institute"/>
            <person name="Copeland A."/>
            <person name="Lucas S."/>
            <person name="Lapidus A."/>
            <person name="Barry K."/>
            <person name="Detter J.C."/>
            <person name="Glavina del Rio T."/>
            <person name="Hammon N."/>
            <person name="Israni S."/>
            <person name="Dalin E."/>
            <person name="Tice H."/>
            <person name="Pitluck S."/>
            <person name="Kiss H."/>
            <person name="Brettin T."/>
            <person name="Bruce D."/>
            <person name="Han C."/>
            <person name="Tapia R."/>
            <person name="Gilna P."/>
            <person name="Schmutz J."/>
            <person name="Larimer F."/>
            <person name="Land M."/>
            <person name="Hauser L."/>
            <person name="Kyrpides N."/>
            <person name="Mikhailova N."/>
            <person name="Nealson K."/>
            <person name="Konstantinidis K."/>
            <person name="Klappenbach J."/>
            <person name="Tiedje J."/>
            <person name="Richardson P."/>
        </authorList>
    </citation>
    <scope>NUCLEOTIDE SEQUENCE [LARGE SCALE GENOMIC DNA]</scope>
    <source>
        <strain>MR-4</strain>
    </source>
</reference>
<organism>
    <name type="scientific">Shewanella sp. (strain MR-4)</name>
    <dbReference type="NCBI Taxonomy" id="60480"/>
    <lineage>
        <taxon>Bacteria</taxon>
        <taxon>Pseudomonadati</taxon>
        <taxon>Pseudomonadota</taxon>
        <taxon>Gammaproteobacteria</taxon>
        <taxon>Alteromonadales</taxon>
        <taxon>Shewanellaceae</taxon>
        <taxon>Shewanella</taxon>
    </lineage>
</organism>
<proteinExistence type="inferred from homology"/>
<protein>
    <recommendedName>
        <fullName evidence="1">tRNA pseudouridine synthase A</fullName>
        <ecNumber evidence="1">5.4.99.12</ecNumber>
    </recommendedName>
    <alternativeName>
        <fullName evidence="1">tRNA pseudouridine(38-40) synthase</fullName>
    </alternativeName>
    <alternativeName>
        <fullName evidence="1">tRNA pseudouridylate synthase I</fullName>
    </alternativeName>
    <alternativeName>
        <fullName evidence="1">tRNA-uridine isomerase I</fullName>
    </alternativeName>
</protein>
<comment type="function">
    <text evidence="1">Formation of pseudouridine at positions 38, 39 and 40 in the anticodon stem and loop of transfer RNAs.</text>
</comment>
<comment type="catalytic activity">
    <reaction evidence="1">
        <text>uridine(38/39/40) in tRNA = pseudouridine(38/39/40) in tRNA</text>
        <dbReference type="Rhea" id="RHEA:22376"/>
        <dbReference type="Rhea" id="RHEA-COMP:10085"/>
        <dbReference type="Rhea" id="RHEA-COMP:10087"/>
        <dbReference type="ChEBI" id="CHEBI:65314"/>
        <dbReference type="ChEBI" id="CHEBI:65315"/>
        <dbReference type="EC" id="5.4.99.12"/>
    </reaction>
</comment>
<comment type="subunit">
    <text evidence="1">Homodimer.</text>
</comment>
<comment type="similarity">
    <text evidence="1">Belongs to the tRNA pseudouridine synthase TruA family.</text>
</comment>
<gene>
    <name evidence="1" type="primary">truA</name>
    <name type="ordered locus">Shewmr4_1426</name>
</gene>
<evidence type="ECO:0000255" key="1">
    <source>
        <dbReference type="HAMAP-Rule" id="MF_00171"/>
    </source>
</evidence>
<dbReference type="EC" id="5.4.99.12" evidence="1"/>
<dbReference type="EMBL" id="CP000446">
    <property type="protein sequence ID" value="ABI38504.1"/>
    <property type="molecule type" value="Genomic_DNA"/>
</dbReference>
<dbReference type="RefSeq" id="WP_011622209.1">
    <property type="nucleotide sequence ID" value="NC_008321.1"/>
</dbReference>
<dbReference type="SMR" id="Q0HKB3"/>
<dbReference type="KEGG" id="she:Shewmr4_1426"/>
<dbReference type="HOGENOM" id="CLU_014673_0_2_6"/>
<dbReference type="GO" id="GO:0003723">
    <property type="term" value="F:RNA binding"/>
    <property type="evidence" value="ECO:0007669"/>
    <property type="project" value="InterPro"/>
</dbReference>
<dbReference type="GO" id="GO:0160147">
    <property type="term" value="F:tRNA pseudouridine(38-40) synthase activity"/>
    <property type="evidence" value="ECO:0007669"/>
    <property type="project" value="UniProtKB-EC"/>
</dbReference>
<dbReference type="GO" id="GO:0031119">
    <property type="term" value="P:tRNA pseudouridine synthesis"/>
    <property type="evidence" value="ECO:0007669"/>
    <property type="project" value="UniProtKB-UniRule"/>
</dbReference>
<dbReference type="CDD" id="cd02570">
    <property type="entry name" value="PseudoU_synth_EcTruA"/>
    <property type="match status" value="1"/>
</dbReference>
<dbReference type="FunFam" id="3.30.70.580:FF:000001">
    <property type="entry name" value="tRNA pseudouridine synthase A"/>
    <property type="match status" value="1"/>
</dbReference>
<dbReference type="FunFam" id="3.30.70.660:FF:000001">
    <property type="entry name" value="tRNA pseudouridine synthase A"/>
    <property type="match status" value="1"/>
</dbReference>
<dbReference type="Gene3D" id="3.30.70.660">
    <property type="entry name" value="Pseudouridine synthase I, catalytic domain, C-terminal subdomain"/>
    <property type="match status" value="1"/>
</dbReference>
<dbReference type="Gene3D" id="3.30.70.580">
    <property type="entry name" value="Pseudouridine synthase I, catalytic domain, N-terminal subdomain"/>
    <property type="match status" value="1"/>
</dbReference>
<dbReference type="HAMAP" id="MF_00171">
    <property type="entry name" value="TruA"/>
    <property type="match status" value="1"/>
</dbReference>
<dbReference type="InterPro" id="IPR020103">
    <property type="entry name" value="PsdUridine_synth_cat_dom_sf"/>
</dbReference>
<dbReference type="InterPro" id="IPR001406">
    <property type="entry name" value="PsdUridine_synth_TruA"/>
</dbReference>
<dbReference type="InterPro" id="IPR020097">
    <property type="entry name" value="PsdUridine_synth_TruA_a/b_dom"/>
</dbReference>
<dbReference type="InterPro" id="IPR020095">
    <property type="entry name" value="PsdUridine_synth_TruA_C"/>
</dbReference>
<dbReference type="InterPro" id="IPR020094">
    <property type="entry name" value="TruA/RsuA/RluB/E/F_N"/>
</dbReference>
<dbReference type="NCBIfam" id="TIGR00071">
    <property type="entry name" value="hisT_truA"/>
    <property type="match status" value="1"/>
</dbReference>
<dbReference type="PANTHER" id="PTHR11142">
    <property type="entry name" value="PSEUDOURIDYLATE SYNTHASE"/>
    <property type="match status" value="1"/>
</dbReference>
<dbReference type="PANTHER" id="PTHR11142:SF0">
    <property type="entry name" value="TRNA PSEUDOURIDINE SYNTHASE-LIKE 1"/>
    <property type="match status" value="1"/>
</dbReference>
<dbReference type="Pfam" id="PF01416">
    <property type="entry name" value="PseudoU_synth_1"/>
    <property type="match status" value="2"/>
</dbReference>
<dbReference type="PIRSF" id="PIRSF001430">
    <property type="entry name" value="tRNA_psdUrid_synth"/>
    <property type="match status" value="1"/>
</dbReference>
<dbReference type="SUPFAM" id="SSF55120">
    <property type="entry name" value="Pseudouridine synthase"/>
    <property type="match status" value="1"/>
</dbReference>
<accession>Q0HKB3</accession>
<name>TRUA_SHESM</name>
<keyword id="KW-0413">Isomerase</keyword>
<keyword id="KW-0819">tRNA processing</keyword>
<feature type="chain" id="PRO_1000017172" description="tRNA pseudouridine synthase A">
    <location>
        <begin position="1"/>
        <end position="261"/>
    </location>
</feature>
<feature type="active site" description="Nucleophile" evidence="1">
    <location>
        <position position="51"/>
    </location>
</feature>
<feature type="binding site" evidence="1">
    <location>
        <position position="109"/>
    </location>
    <ligand>
        <name>substrate</name>
    </ligand>
</feature>
<sequence>MRIALGIEYDGSGYFGWQRQAEVDSVQGQLEQALSKVANEPISLFCAGRTDAGVHATGQVVHFETNAIRNEGAWTLGVNANLPDNIAVRWAKEVDDSFHARFSATARRYRYVIYNHNFRPGILRHGVSHYHGDIDADKMHVAAQALLGEQDFTSFRAVQCQSKTPFRNVHSVKVTRQGMYVIVDISANAFLHHMVRNIVGSLLEIGLGNQPLTWMADLLALKDRNQAAATAKPNGLYLVDVTYPEQYQLPKLALGPLFMLD</sequence>